<dbReference type="EC" id="6.2.1.5" evidence="1"/>
<dbReference type="EMBL" id="CP000724">
    <property type="protein sequence ID" value="ABR46711.1"/>
    <property type="molecule type" value="Genomic_DNA"/>
</dbReference>
<dbReference type="RefSeq" id="WP_011971619.1">
    <property type="nucleotide sequence ID" value="NC_009633.1"/>
</dbReference>
<dbReference type="SMR" id="A6TKJ3"/>
<dbReference type="STRING" id="293826.Amet_0484"/>
<dbReference type="KEGG" id="amt:Amet_0484"/>
<dbReference type="eggNOG" id="COG0045">
    <property type="taxonomic scope" value="Bacteria"/>
</dbReference>
<dbReference type="HOGENOM" id="CLU_037430_0_2_9"/>
<dbReference type="OrthoDB" id="9802602at2"/>
<dbReference type="UniPathway" id="UPA00223">
    <property type="reaction ID" value="UER00999"/>
</dbReference>
<dbReference type="Proteomes" id="UP000001572">
    <property type="component" value="Chromosome"/>
</dbReference>
<dbReference type="GO" id="GO:0005829">
    <property type="term" value="C:cytosol"/>
    <property type="evidence" value="ECO:0007669"/>
    <property type="project" value="TreeGrafter"/>
</dbReference>
<dbReference type="GO" id="GO:0042709">
    <property type="term" value="C:succinate-CoA ligase complex"/>
    <property type="evidence" value="ECO:0007669"/>
    <property type="project" value="TreeGrafter"/>
</dbReference>
<dbReference type="GO" id="GO:0005524">
    <property type="term" value="F:ATP binding"/>
    <property type="evidence" value="ECO:0007669"/>
    <property type="project" value="UniProtKB-UniRule"/>
</dbReference>
<dbReference type="GO" id="GO:0000287">
    <property type="term" value="F:magnesium ion binding"/>
    <property type="evidence" value="ECO:0007669"/>
    <property type="project" value="UniProtKB-UniRule"/>
</dbReference>
<dbReference type="GO" id="GO:0004775">
    <property type="term" value="F:succinate-CoA ligase (ADP-forming) activity"/>
    <property type="evidence" value="ECO:0007669"/>
    <property type="project" value="UniProtKB-UniRule"/>
</dbReference>
<dbReference type="GO" id="GO:0004776">
    <property type="term" value="F:succinate-CoA ligase (GDP-forming) activity"/>
    <property type="evidence" value="ECO:0007669"/>
    <property type="project" value="RHEA"/>
</dbReference>
<dbReference type="GO" id="GO:0006104">
    <property type="term" value="P:succinyl-CoA metabolic process"/>
    <property type="evidence" value="ECO:0007669"/>
    <property type="project" value="TreeGrafter"/>
</dbReference>
<dbReference type="GO" id="GO:0006099">
    <property type="term" value="P:tricarboxylic acid cycle"/>
    <property type="evidence" value="ECO:0007669"/>
    <property type="project" value="UniProtKB-UniRule"/>
</dbReference>
<dbReference type="FunFam" id="3.30.1490.20:FF:000002">
    <property type="entry name" value="Succinate--CoA ligase [ADP-forming] subunit beta"/>
    <property type="match status" value="1"/>
</dbReference>
<dbReference type="FunFam" id="3.30.470.20:FF:000002">
    <property type="entry name" value="Succinate--CoA ligase [ADP-forming] subunit beta"/>
    <property type="match status" value="1"/>
</dbReference>
<dbReference type="FunFam" id="3.40.50.261:FF:000001">
    <property type="entry name" value="Succinate--CoA ligase [ADP-forming] subunit beta"/>
    <property type="match status" value="1"/>
</dbReference>
<dbReference type="Gene3D" id="3.30.1490.20">
    <property type="entry name" value="ATP-grasp fold, A domain"/>
    <property type="match status" value="1"/>
</dbReference>
<dbReference type="Gene3D" id="3.30.470.20">
    <property type="entry name" value="ATP-grasp fold, B domain"/>
    <property type="match status" value="1"/>
</dbReference>
<dbReference type="Gene3D" id="3.40.50.261">
    <property type="entry name" value="Succinyl-CoA synthetase domains"/>
    <property type="match status" value="1"/>
</dbReference>
<dbReference type="HAMAP" id="MF_00558">
    <property type="entry name" value="Succ_CoA_beta"/>
    <property type="match status" value="1"/>
</dbReference>
<dbReference type="InterPro" id="IPR011761">
    <property type="entry name" value="ATP-grasp"/>
</dbReference>
<dbReference type="InterPro" id="IPR013650">
    <property type="entry name" value="ATP-grasp_succ-CoA_synth-type"/>
</dbReference>
<dbReference type="InterPro" id="IPR013815">
    <property type="entry name" value="ATP_grasp_subdomain_1"/>
</dbReference>
<dbReference type="InterPro" id="IPR017866">
    <property type="entry name" value="Succ-CoA_synthase_bsu_CS"/>
</dbReference>
<dbReference type="InterPro" id="IPR005811">
    <property type="entry name" value="SUCC_ACL_C"/>
</dbReference>
<dbReference type="InterPro" id="IPR005809">
    <property type="entry name" value="Succ_CoA_ligase-like_bsu"/>
</dbReference>
<dbReference type="InterPro" id="IPR016102">
    <property type="entry name" value="Succinyl-CoA_synth-like"/>
</dbReference>
<dbReference type="NCBIfam" id="NF001913">
    <property type="entry name" value="PRK00696.1"/>
    <property type="match status" value="1"/>
</dbReference>
<dbReference type="NCBIfam" id="TIGR01016">
    <property type="entry name" value="sucCoAbeta"/>
    <property type="match status" value="1"/>
</dbReference>
<dbReference type="PANTHER" id="PTHR11815:SF10">
    <property type="entry name" value="SUCCINATE--COA LIGASE [GDP-FORMING] SUBUNIT BETA, MITOCHONDRIAL"/>
    <property type="match status" value="1"/>
</dbReference>
<dbReference type="PANTHER" id="PTHR11815">
    <property type="entry name" value="SUCCINYL-COA SYNTHETASE BETA CHAIN"/>
    <property type="match status" value="1"/>
</dbReference>
<dbReference type="Pfam" id="PF08442">
    <property type="entry name" value="ATP-grasp_2"/>
    <property type="match status" value="1"/>
</dbReference>
<dbReference type="Pfam" id="PF00549">
    <property type="entry name" value="Ligase_CoA"/>
    <property type="match status" value="1"/>
</dbReference>
<dbReference type="PIRSF" id="PIRSF001554">
    <property type="entry name" value="SucCS_beta"/>
    <property type="match status" value="1"/>
</dbReference>
<dbReference type="SUPFAM" id="SSF56059">
    <property type="entry name" value="Glutathione synthetase ATP-binding domain-like"/>
    <property type="match status" value="1"/>
</dbReference>
<dbReference type="SUPFAM" id="SSF52210">
    <property type="entry name" value="Succinyl-CoA synthetase domains"/>
    <property type="match status" value="1"/>
</dbReference>
<dbReference type="PROSITE" id="PS50975">
    <property type="entry name" value="ATP_GRASP"/>
    <property type="match status" value="1"/>
</dbReference>
<dbReference type="PROSITE" id="PS01217">
    <property type="entry name" value="SUCCINYL_COA_LIG_3"/>
    <property type="match status" value="1"/>
</dbReference>
<gene>
    <name evidence="1" type="primary">sucC</name>
    <name type="ordered locus">Amet_0484</name>
</gene>
<organism>
    <name type="scientific">Alkaliphilus metalliredigens (strain QYMF)</name>
    <dbReference type="NCBI Taxonomy" id="293826"/>
    <lineage>
        <taxon>Bacteria</taxon>
        <taxon>Bacillati</taxon>
        <taxon>Bacillota</taxon>
        <taxon>Clostridia</taxon>
        <taxon>Peptostreptococcales</taxon>
        <taxon>Natronincolaceae</taxon>
        <taxon>Alkaliphilus</taxon>
    </lineage>
</organism>
<protein>
    <recommendedName>
        <fullName evidence="1">Succinate--CoA ligase [ADP-forming] subunit beta</fullName>
        <ecNumber evidence="1">6.2.1.5</ecNumber>
    </recommendedName>
    <alternativeName>
        <fullName evidence="1">Succinyl-CoA synthetase subunit beta</fullName>
        <shortName evidence="1">SCS-beta</shortName>
    </alternativeName>
</protein>
<feature type="chain" id="PRO_1000081996" description="Succinate--CoA ligase [ADP-forming] subunit beta">
    <location>
        <begin position="1"/>
        <end position="397"/>
    </location>
</feature>
<feature type="domain" description="ATP-grasp" evidence="1">
    <location>
        <begin position="9"/>
        <end position="244"/>
    </location>
</feature>
<feature type="binding site" evidence="1">
    <location>
        <position position="46"/>
    </location>
    <ligand>
        <name>ATP</name>
        <dbReference type="ChEBI" id="CHEBI:30616"/>
    </ligand>
</feature>
<feature type="binding site" evidence="1">
    <location>
        <begin position="53"/>
        <end position="55"/>
    </location>
    <ligand>
        <name>ATP</name>
        <dbReference type="ChEBI" id="CHEBI:30616"/>
    </ligand>
</feature>
<feature type="binding site" evidence="1">
    <location>
        <position position="99"/>
    </location>
    <ligand>
        <name>ATP</name>
        <dbReference type="ChEBI" id="CHEBI:30616"/>
    </ligand>
</feature>
<feature type="binding site" evidence="1">
    <location>
        <position position="102"/>
    </location>
    <ligand>
        <name>ATP</name>
        <dbReference type="ChEBI" id="CHEBI:30616"/>
    </ligand>
</feature>
<feature type="binding site" evidence="1">
    <location>
        <position position="107"/>
    </location>
    <ligand>
        <name>ATP</name>
        <dbReference type="ChEBI" id="CHEBI:30616"/>
    </ligand>
</feature>
<feature type="binding site" evidence="1">
    <location>
        <position position="199"/>
    </location>
    <ligand>
        <name>Mg(2+)</name>
        <dbReference type="ChEBI" id="CHEBI:18420"/>
    </ligand>
</feature>
<feature type="binding site" evidence="1">
    <location>
        <position position="213"/>
    </location>
    <ligand>
        <name>Mg(2+)</name>
        <dbReference type="ChEBI" id="CHEBI:18420"/>
    </ligand>
</feature>
<feature type="binding site" evidence="1">
    <location>
        <position position="264"/>
    </location>
    <ligand>
        <name>substrate</name>
        <note>ligand shared with subunit alpha</note>
    </ligand>
</feature>
<feature type="binding site" evidence="1">
    <location>
        <begin position="321"/>
        <end position="323"/>
    </location>
    <ligand>
        <name>substrate</name>
        <note>ligand shared with subunit alpha</note>
    </ligand>
</feature>
<proteinExistence type="inferred from homology"/>
<accession>A6TKJ3</accession>
<comment type="function">
    <text evidence="1">Succinyl-CoA synthetase functions in the citric acid cycle (TCA), coupling the hydrolysis of succinyl-CoA to the synthesis of either ATP or GTP and thus represents the only step of substrate-level phosphorylation in the TCA. The beta subunit provides nucleotide specificity of the enzyme and binds the substrate succinate, while the binding sites for coenzyme A and phosphate are found in the alpha subunit.</text>
</comment>
<comment type="catalytic activity">
    <reaction evidence="1">
        <text>succinate + ATP + CoA = succinyl-CoA + ADP + phosphate</text>
        <dbReference type="Rhea" id="RHEA:17661"/>
        <dbReference type="ChEBI" id="CHEBI:30031"/>
        <dbReference type="ChEBI" id="CHEBI:30616"/>
        <dbReference type="ChEBI" id="CHEBI:43474"/>
        <dbReference type="ChEBI" id="CHEBI:57287"/>
        <dbReference type="ChEBI" id="CHEBI:57292"/>
        <dbReference type="ChEBI" id="CHEBI:456216"/>
        <dbReference type="EC" id="6.2.1.5"/>
    </reaction>
    <physiologicalReaction direction="right-to-left" evidence="1">
        <dbReference type="Rhea" id="RHEA:17663"/>
    </physiologicalReaction>
</comment>
<comment type="catalytic activity">
    <reaction evidence="1">
        <text>GTP + succinate + CoA = succinyl-CoA + GDP + phosphate</text>
        <dbReference type="Rhea" id="RHEA:22120"/>
        <dbReference type="ChEBI" id="CHEBI:30031"/>
        <dbReference type="ChEBI" id="CHEBI:37565"/>
        <dbReference type="ChEBI" id="CHEBI:43474"/>
        <dbReference type="ChEBI" id="CHEBI:57287"/>
        <dbReference type="ChEBI" id="CHEBI:57292"/>
        <dbReference type="ChEBI" id="CHEBI:58189"/>
    </reaction>
    <physiologicalReaction direction="right-to-left" evidence="1">
        <dbReference type="Rhea" id="RHEA:22122"/>
    </physiologicalReaction>
</comment>
<comment type="cofactor">
    <cofactor evidence="1">
        <name>Mg(2+)</name>
        <dbReference type="ChEBI" id="CHEBI:18420"/>
    </cofactor>
    <text evidence="1">Binds 1 Mg(2+) ion per subunit.</text>
</comment>
<comment type="pathway">
    <text evidence="1">Carbohydrate metabolism; tricarboxylic acid cycle; succinate from succinyl-CoA (ligase route): step 1/1.</text>
</comment>
<comment type="subunit">
    <text evidence="1">Heterotetramer of two alpha and two beta subunits.</text>
</comment>
<comment type="similarity">
    <text evidence="1">Belongs to the succinate/malate CoA ligase beta subunit family.</text>
</comment>
<name>SUCC_ALKMQ</name>
<sequence>MNIHEYQGKEIMKQYGISVPRSRITFTVEEAVQAAIDLGCEVIAVKAQIHAGGRGKAGGVKITRSLEETKSAAEAILDKILITKQTGPEGKVVNQVLIEEGLKIEKECYLSCAVDSTTSTVVLIGSPEGGMDIEEVAEKTPHKIFKESIDPAIGLQQYQARRLAFNMGINEACLQEAAQCIMNIYRLFMEKDCSMVEINPLITTEEHKVVALDCKVCFDDNSLCRHPEILKYRDLTEEDPREVQASKYDLSYISLSGNIGCMVNGAGLAMATMDMIDHFGGAPANFLDVGGGATAEKVKEAFKILISDKKVAGIFVNIFGGIMKCDVIATGILQAVNALDLDVPLVVRLEGTNVELGKEILKSSWLDVITVNSMAEGAEKIVALVNGKGVVRDERLN</sequence>
<evidence type="ECO:0000255" key="1">
    <source>
        <dbReference type="HAMAP-Rule" id="MF_00558"/>
    </source>
</evidence>
<reference key="1">
    <citation type="journal article" date="2016" name="Genome Announc.">
        <title>Complete genome sequence of Alkaliphilus metalliredigens strain QYMF, an alkaliphilic and metal-reducing bacterium isolated from borax-contaminated leachate ponds.</title>
        <authorList>
            <person name="Hwang C."/>
            <person name="Copeland A."/>
            <person name="Lucas S."/>
            <person name="Lapidus A."/>
            <person name="Barry K."/>
            <person name="Detter J.C."/>
            <person name="Glavina Del Rio T."/>
            <person name="Hammon N."/>
            <person name="Israni S."/>
            <person name="Dalin E."/>
            <person name="Tice H."/>
            <person name="Pitluck S."/>
            <person name="Chertkov O."/>
            <person name="Brettin T."/>
            <person name="Bruce D."/>
            <person name="Han C."/>
            <person name="Schmutz J."/>
            <person name="Larimer F."/>
            <person name="Land M.L."/>
            <person name="Hauser L."/>
            <person name="Kyrpides N."/>
            <person name="Mikhailova N."/>
            <person name="Ye Q."/>
            <person name="Zhou J."/>
            <person name="Richardson P."/>
            <person name="Fields M.W."/>
        </authorList>
    </citation>
    <scope>NUCLEOTIDE SEQUENCE [LARGE SCALE GENOMIC DNA]</scope>
    <source>
        <strain>QYMF</strain>
    </source>
</reference>
<keyword id="KW-0067">ATP-binding</keyword>
<keyword id="KW-0436">Ligase</keyword>
<keyword id="KW-0460">Magnesium</keyword>
<keyword id="KW-0479">Metal-binding</keyword>
<keyword id="KW-0547">Nucleotide-binding</keyword>
<keyword id="KW-1185">Reference proteome</keyword>
<keyword id="KW-0816">Tricarboxylic acid cycle</keyword>